<comment type="function">
    <text>Low affinity receptor for granulocyte-macrophage colony-stimulating factor. Transduces a signal that results in the proliferation, differentiation, and functional activation of hematopoietic cells.</text>
</comment>
<comment type="subunit">
    <text evidence="1">Heterodimer of an alpha and a beta subunit. The beta subunit is common to the IL3, IL5 and GM-CSF receptors. The signaling GM-CSF receptor complex is a dodecamer of two head-to-head hexamers of two alpha, two beta, and two ligand subunits (By similarity).</text>
</comment>
<comment type="subcellular location">
    <subcellularLocation>
        <location evidence="4">Membrane</location>
        <topology evidence="4">Single-pass type I membrane protein</topology>
    </subcellularLocation>
</comment>
<comment type="domain">
    <text>The WSXWS motif appears to be necessary for proper protein folding and thereby efficient intracellular transport and cell-surface receptor binding.</text>
</comment>
<comment type="domain">
    <text>The box 1 motif is required for JAK interaction and/or activation.</text>
</comment>
<comment type="similarity">
    <text evidence="4">Belongs to the type I cytokine receptor family. Type 5 subfamily.</text>
</comment>
<sequence length="388" mass="41769">MTSSHAMNITPLAQLALLFSTLLLPGTQALLAPTTPDAGSALNLTFDPWTRTLTWACDTAAGNVTVTSCTVTSREAGIHRRVSPFGCRCWFRRMMALHHGVTLDVNGTVGGAAAHWRLSFVNEGAAGSGAENLTCEIRAARFLSCAWREGPAAPADVRYSLRVLNSTGHDVARCMADPGDDVITQCIANDLSLLGSEAYLVVTGRSGAGPVRFLDDVVATKALERLGPPRDVTASCNSSHCTVSWAPPSTWASLTARDFQFEVQWQSAEPGSTPRKVLVVEETRLAFPSPAPHGGHKVKVRAGDTRMKHWGEWSPAHPLEAEDTRVPGALLYAVTACAVLLCALALGVTCRRFEVTRRLFPPIPGIRDKVSDDVRVNPETLRKDLLQP</sequence>
<organism>
    <name type="scientific">Mus musculus</name>
    <name type="common">Mouse</name>
    <dbReference type="NCBI Taxonomy" id="10090"/>
    <lineage>
        <taxon>Eukaryota</taxon>
        <taxon>Metazoa</taxon>
        <taxon>Chordata</taxon>
        <taxon>Craniata</taxon>
        <taxon>Vertebrata</taxon>
        <taxon>Euteleostomi</taxon>
        <taxon>Mammalia</taxon>
        <taxon>Eutheria</taxon>
        <taxon>Euarchontoglires</taxon>
        <taxon>Glires</taxon>
        <taxon>Rodentia</taxon>
        <taxon>Myomorpha</taxon>
        <taxon>Muroidea</taxon>
        <taxon>Muridae</taxon>
        <taxon>Murinae</taxon>
        <taxon>Mus</taxon>
        <taxon>Mus</taxon>
    </lineage>
</organism>
<proteinExistence type="evidence at transcript level"/>
<reference key="1">
    <citation type="journal article" date="1992" name="Proc. Natl. Acad. Sci. U.S.A.">
        <title>Cloning of the low-affinity murine granulocyte-macrophage colony-stimulating factor receptor and reconstitution of a high-affinity receptor complex.</title>
        <authorList>
            <person name="Park L.S."/>
            <person name="Martin U."/>
            <person name="Sorensen R."/>
            <person name="Luhr S."/>
            <person name="Morrissey P.J."/>
            <person name="Cosman D."/>
            <person name="Larsen A."/>
        </authorList>
    </citation>
    <scope>NUCLEOTIDE SEQUENCE [MRNA]</scope>
    <source>
        <tissue>Neonatal spleen</tissue>
    </source>
</reference>
<reference key="2">
    <citation type="journal article" date="2009" name="PLoS Biol.">
        <title>Lineage-specific biology revealed by a finished genome assembly of the mouse.</title>
        <authorList>
            <person name="Church D.M."/>
            <person name="Goodstadt L."/>
            <person name="Hillier L.W."/>
            <person name="Zody M.C."/>
            <person name="Goldstein S."/>
            <person name="She X."/>
            <person name="Bult C.J."/>
            <person name="Agarwala R."/>
            <person name="Cherry J.L."/>
            <person name="DiCuccio M."/>
            <person name="Hlavina W."/>
            <person name="Kapustin Y."/>
            <person name="Meric P."/>
            <person name="Maglott D."/>
            <person name="Birtle Z."/>
            <person name="Marques A.C."/>
            <person name="Graves T."/>
            <person name="Zhou S."/>
            <person name="Teague B."/>
            <person name="Potamousis K."/>
            <person name="Churas C."/>
            <person name="Place M."/>
            <person name="Herschleb J."/>
            <person name="Runnheim R."/>
            <person name="Forrest D."/>
            <person name="Amos-Landgraf J."/>
            <person name="Schwartz D.C."/>
            <person name="Cheng Z."/>
            <person name="Lindblad-Toh K."/>
            <person name="Eichler E.E."/>
            <person name="Ponting C.P."/>
        </authorList>
    </citation>
    <scope>NUCLEOTIDE SEQUENCE [LARGE SCALE GENOMIC DNA]</scope>
    <source>
        <strain>C57BL/6J</strain>
    </source>
</reference>
<evidence type="ECO:0000250" key="1"/>
<evidence type="ECO:0000255" key="2"/>
<evidence type="ECO:0000255" key="3">
    <source>
        <dbReference type="PROSITE-ProRule" id="PRU00316"/>
    </source>
</evidence>
<evidence type="ECO:0000305" key="4"/>
<feature type="signal peptide" evidence="2">
    <location>
        <begin position="1"/>
        <end position="29"/>
    </location>
</feature>
<feature type="chain" id="PRO_0000010873" description="Granulocyte-macrophage colony-stimulating factor receptor subunit alpha">
    <location>
        <begin position="30"/>
        <end position="388"/>
    </location>
</feature>
<feature type="topological domain" description="Extracellular" evidence="2">
    <location>
        <begin position="30"/>
        <end position="327"/>
    </location>
</feature>
<feature type="transmembrane region" description="Helical" evidence="2">
    <location>
        <begin position="328"/>
        <end position="348"/>
    </location>
</feature>
<feature type="topological domain" description="Cytoplasmic" evidence="2">
    <location>
        <begin position="349"/>
        <end position="388"/>
    </location>
</feature>
<feature type="domain" description="Fibronectin type-III" evidence="3">
    <location>
        <begin position="228"/>
        <end position="324"/>
    </location>
</feature>
<feature type="short sequence motif" description="WSXWS motif">
    <location>
        <begin position="310"/>
        <end position="314"/>
    </location>
</feature>
<feature type="short sequence motif" description="Box 1 motif">
    <location>
        <begin position="359"/>
        <end position="367"/>
    </location>
</feature>
<feature type="glycosylation site" description="N-linked (GlcNAc...) asparagine" evidence="2">
    <location>
        <position position="43"/>
    </location>
</feature>
<feature type="glycosylation site" description="N-linked (GlcNAc...) asparagine" evidence="2">
    <location>
        <position position="63"/>
    </location>
</feature>
<feature type="glycosylation site" description="N-linked (GlcNAc...) asparagine" evidence="2">
    <location>
        <position position="106"/>
    </location>
</feature>
<feature type="glycosylation site" description="N-linked (GlcNAc...) asparagine" evidence="2">
    <location>
        <position position="132"/>
    </location>
</feature>
<feature type="glycosylation site" description="N-linked (GlcNAc...) asparagine" evidence="2">
    <location>
        <position position="165"/>
    </location>
</feature>
<feature type="glycosylation site" description="N-linked (GlcNAc...) asparagine" evidence="2">
    <location>
        <position position="237"/>
    </location>
</feature>
<feature type="sequence conflict" description="In Ref. 1; AAA37421." evidence="4" ref="1">
    <original>G</original>
    <variation>S</variation>
    <location>
        <position position="124"/>
    </location>
</feature>
<keyword id="KW-0325">Glycoprotein</keyword>
<keyword id="KW-0472">Membrane</keyword>
<keyword id="KW-0675">Receptor</keyword>
<keyword id="KW-1185">Reference proteome</keyword>
<keyword id="KW-0732">Signal</keyword>
<keyword id="KW-0812">Transmembrane</keyword>
<keyword id="KW-1133">Transmembrane helix</keyword>
<accession>Q00941</accession>
<accession>E9QJX0</accession>
<dbReference type="EMBL" id="M85078">
    <property type="protein sequence ID" value="AAA37421.1"/>
    <property type="molecule type" value="mRNA"/>
</dbReference>
<dbReference type="EMBL" id="AC165327">
    <property type="status" value="NOT_ANNOTATED_CDS"/>
    <property type="molecule type" value="Genomic_DNA"/>
</dbReference>
<dbReference type="CCDS" id="CCDS29946.1"/>
<dbReference type="PIR" id="A45304">
    <property type="entry name" value="A45304"/>
</dbReference>
<dbReference type="RefSeq" id="NP_034100.2">
    <property type="nucleotide sequence ID" value="NM_009970.2"/>
</dbReference>
<dbReference type="SMR" id="Q00941"/>
<dbReference type="BioGRID" id="198931">
    <property type="interactions" value="1"/>
</dbReference>
<dbReference type="FunCoup" id="Q00941">
    <property type="interactions" value="406"/>
</dbReference>
<dbReference type="STRING" id="10090.ENSMUSP00000075423"/>
<dbReference type="GlyCosmos" id="Q00941">
    <property type="glycosylation" value="6 sites, No reported glycans"/>
</dbReference>
<dbReference type="GlyGen" id="Q00941">
    <property type="glycosylation" value="6 sites"/>
</dbReference>
<dbReference type="PhosphoSitePlus" id="Q00941"/>
<dbReference type="SwissPalm" id="Q00941"/>
<dbReference type="PaxDb" id="10090-ENSMUSP00000075423"/>
<dbReference type="ProteomicsDB" id="285346"/>
<dbReference type="Antibodypedia" id="4251">
    <property type="antibodies" value="770 antibodies from 42 providers"/>
</dbReference>
<dbReference type="DNASU" id="12982"/>
<dbReference type="Ensembl" id="ENSMUST00000076046.7">
    <property type="protein sequence ID" value="ENSMUSP00000075423.7"/>
    <property type="gene ID" value="ENSMUSG00000059326.8"/>
</dbReference>
<dbReference type="Ensembl" id="ENSMUST00000237386.2">
    <property type="protein sequence ID" value="ENSMUSP00000158457.2"/>
    <property type="gene ID" value="ENSMUSG00000059326.8"/>
</dbReference>
<dbReference type="GeneID" id="12982"/>
<dbReference type="KEGG" id="mmu:12982"/>
<dbReference type="UCSC" id="uc008icj.2">
    <property type="organism name" value="mouse"/>
</dbReference>
<dbReference type="AGR" id="MGI:1339754"/>
<dbReference type="CTD" id="1438"/>
<dbReference type="MGI" id="MGI:1339754">
    <property type="gene designation" value="Csf2ra"/>
</dbReference>
<dbReference type="VEuPathDB" id="HostDB:ENSMUSG00000059326"/>
<dbReference type="eggNOG" id="ENOG502RZVR">
    <property type="taxonomic scope" value="Eukaryota"/>
</dbReference>
<dbReference type="GeneTree" id="ENSGT00520000055993"/>
<dbReference type="HOGENOM" id="CLU_039627_2_0_1"/>
<dbReference type="InParanoid" id="Q00941"/>
<dbReference type="OMA" id="NWRKMEL"/>
<dbReference type="PhylomeDB" id="Q00941"/>
<dbReference type="TreeFam" id="TF331549"/>
<dbReference type="BioGRID-ORCS" id="12982">
    <property type="hits" value="3 hits in 77 CRISPR screens"/>
</dbReference>
<dbReference type="ChiTaRS" id="Csf2ra">
    <property type="organism name" value="mouse"/>
</dbReference>
<dbReference type="PRO" id="PR:Q00941"/>
<dbReference type="Proteomes" id="UP000000589">
    <property type="component" value="Chromosome 19"/>
</dbReference>
<dbReference type="RNAct" id="Q00941">
    <property type="molecule type" value="protein"/>
</dbReference>
<dbReference type="Bgee" id="ENSMUSG00000059326">
    <property type="expression patterns" value="Expressed in granulocyte and 242 other cell types or tissues"/>
</dbReference>
<dbReference type="GO" id="GO:0016020">
    <property type="term" value="C:membrane"/>
    <property type="evidence" value="ECO:0007669"/>
    <property type="project" value="UniProtKB-SubCell"/>
</dbReference>
<dbReference type="GO" id="GO:0005886">
    <property type="term" value="C:plasma membrane"/>
    <property type="evidence" value="ECO:0000314"/>
    <property type="project" value="MGI"/>
</dbReference>
<dbReference type="GO" id="GO:0004896">
    <property type="term" value="F:cytokine receptor activity"/>
    <property type="evidence" value="ECO:0007669"/>
    <property type="project" value="InterPro"/>
</dbReference>
<dbReference type="GO" id="GO:0051916">
    <property type="term" value="F:granulocyte colony-stimulating factor binding"/>
    <property type="evidence" value="ECO:0000314"/>
    <property type="project" value="MGI"/>
</dbReference>
<dbReference type="GO" id="GO:0004902">
    <property type="term" value="F:granulocyte colony-stimulating factor receptor activity"/>
    <property type="evidence" value="ECO:0000314"/>
    <property type="project" value="MGI"/>
</dbReference>
<dbReference type="GO" id="GO:0097011">
    <property type="term" value="P:cellular response to granulocyte macrophage colony-stimulating factor stimulus"/>
    <property type="evidence" value="ECO:0000314"/>
    <property type="project" value="MGI"/>
</dbReference>
<dbReference type="CDD" id="cd00063">
    <property type="entry name" value="FN3"/>
    <property type="match status" value="1"/>
</dbReference>
<dbReference type="FunFam" id="2.60.40.10:FF:002923">
    <property type="entry name" value="Granulocyte-macrophage colony-stimulating factor receptor subunit alpha"/>
    <property type="match status" value="1"/>
</dbReference>
<dbReference type="Gene3D" id="2.60.40.10">
    <property type="entry name" value="Immunoglobulins"/>
    <property type="match status" value="2"/>
</dbReference>
<dbReference type="InterPro" id="IPR003961">
    <property type="entry name" value="FN3_dom"/>
</dbReference>
<dbReference type="InterPro" id="IPR036116">
    <property type="entry name" value="FN3_sf"/>
</dbReference>
<dbReference type="InterPro" id="IPR013783">
    <property type="entry name" value="Ig-like_fold"/>
</dbReference>
<dbReference type="InterPro" id="IPR040907">
    <property type="entry name" value="IL3Ra_N"/>
</dbReference>
<dbReference type="InterPro" id="IPR003532">
    <property type="entry name" value="Short_hematopoietin_rcpt_2_CS"/>
</dbReference>
<dbReference type="InterPro" id="IPR015321">
    <property type="entry name" value="TypeI_recpt_CBD"/>
</dbReference>
<dbReference type="PANTHER" id="PTHR23037">
    <property type="entry name" value="CYTOKINE RECEPTOR"/>
    <property type="match status" value="1"/>
</dbReference>
<dbReference type="PANTHER" id="PTHR23037:SF46">
    <property type="entry name" value="INTERLEUKIN 5 RECEPTOR SUBUNIT ALPHA"/>
    <property type="match status" value="1"/>
</dbReference>
<dbReference type="Pfam" id="PF18611">
    <property type="entry name" value="IL3Ra_N"/>
    <property type="match status" value="1"/>
</dbReference>
<dbReference type="Pfam" id="PF09240">
    <property type="entry name" value="IL6Ra-bind"/>
    <property type="match status" value="1"/>
</dbReference>
<dbReference type="SUPFAM" id="SSF49265">
    <property type="entry name" value="Fibronectin type III"/>
    <property type="match status" value="2"/>
</dbReference>
<dbReference type="PROSITE" id="PS50853">
    <property type="entry name" value="FN3"/>
    <property type="match status" value="1"/>
</dbReference>
<dbReference type="PROSITE" id="PS01356">
    <property type="entry name" value="HEMATOPO_REC_S_F2"/>
    <property type="match status" value="1"/>
</dbReference>
<name>CSF2R_MOUSE</name>
<protein>
    <recommendedName>
        <fullName>Granulocyte-macrophage colony-stimulating factor receptor subunit alpha</fullName>
        <shortName>GM-CSF-R-alpha</shortName>
        <shortName>GMCSFR-alpha</shortName>
        <shortName>GMR-alpha</shortName>
    </recommendedName>
    <cdAntigenName>CD116</cdAntigenName>
</protein>
<gene>
    <name type="primary">Csf2ra</name>
    <name type="synonym">Csfgmra</name>
</gene>